<organism>
    <name type="scientific">Homo sapiens</name>
    <name type="common">Human</name>
    <dbReference type="NCBI Taxonomy" id="9606"/>
    <lineage>
        <taxon>Eukaryota</taxon>
        <taxon>Metazoa</taxon>
        <taxon>Chordata</taxon>
        <taxon>Craniata</taxon>
        <taxon>Vertebrata</taxon>
        <taxon>Euteleostomi</taxon>
        <taxon>Mammalia</taxon>
        <taxon>Eutheria</taxon>
        <taxon>Euarchontoglires</taxon>
        <taxon>Primates</taxon>
        <taxon>Haplorrhini</taxon>
        <taxon>Catarrhini</taxon>
        <taxon>Hominidae</taxon>
        <taxon>Homo</taxon>
    </lineage>
</organism>
<reference key="1">
    <citation type="journal article" date="1998" name="Genomics">
        <title>A transcriptional map of the FMF region.</title>
        <authorList>
            <person name="Bernot A."/>
            <person name="Heilig R."/>
            <person name="Clepet C."/>
            <person name="Smaoui N."/>
            <person name="Da Silva C."/>
            <person name="Petit J.-L."/>
            <person name="Devaud C."/>
            <person name="Chiannilkulchai N."/>
            <person name="Fizames C."/>
            <person name="Samson D."/>
            <person name="Cruaud C."/>
            <person name="Caloustian C."/>
            <person name="Gyapay G."/>
            <person name="Delpech M."/>
            <person name="Weissenbach J."/>
        </authorList>
    </citation>
    <scope>NUCLEOTIDE SEQUENCE [MRNA]</scope>
</reference>
<reference key="2">
    <citation type="journal article" date="2002" name="Genomics">
        <title>DEFOG: a practical scheme for deciphering families of genes.</title>
        <authorList>
            <person name="Fuchs T."/>
            <person name="Malecova B."/>
            <person name="Linhart C."/>
            <person name="Sharan R."/>
            <person name="Khen M."/>
            <person name="Herwig R."/>
            <person name="Shmulevich D."/>
            <person name="Elkon R."/>
            <person name="Steinfath M."/>
            <person name="O'Brien J.K."/>
            <person name="Radelof U."/>
            <person name="Lehrach H."/>
            <person name="Lancet D."/>
            <person name="Shamir R."/>
        </authorList>
    </citation>
    <scope>NUCLEOTIDE SEQUENCE [GENOMIC DNA] OF 68-283</scope>
</reference>
<proteinExistence type="uncertain"/>
<dbReference type="EMBL" id="AJ003145">
    <property type="status" value="NOT_ANNOTATED_CDS"/>
    <property type="molecule type" value="mRNA"/>
</dbReference>
<dbReference type="EMBL" id="AF399558">
    <property type="protein sequence ID" value="AAK95043.1"/>
    <property type="molecule type" value="Genomic_DNA"/>
</dbReference>
<dbReference type="SMR" id="Q96R84"/>
<dbReference type="FunCoup" id="Q96R84">
    <property type="interactions" value="622"/>
</dbReference>
<dbReference type="BioMuta" id="HGNC:8196"/>
<dbReference type="AGR" id="HGNC:8196"/>
<dbReference type="GeneCards" id="OR1F2P"/>
<dbReference type="HGNC" id="HGNC:8196">
    <property type="gene designation" value="OR1F2P"/>
</dbReference>
<dbReference type="neXtProt" id="NX_Q96R84"/>
<dbReference type="PharmGKB" id="PA32075"/>
<dbReference type="InParanoid" id="Q96R84"/>
<dbReference type="PAN-GO" id="Q96R84">
    <property type="GO annotations" value="3 GO annotations based on evolutionary models"/>
</dbReference>
<dbReference type="PhylomeDB" id="Q96R84"/>
<dbReference type="PathwayCommons" id="Q96R84"/>
<dbReference type="Pharos" id="Q96R84">
    <property type="development level" value="Tdark"/>
</dbReference>
<dbReference type="PRO" id="PR:Q96R84"/>
<dbReference type="Proteomes" id="UP000005640">
    <property type="component" value="Unplaced"/>
</dbReference>
<dbReference type="RNAct" id="Q96R84">
    <property type="molecule type" value="protein"/>
</dbReference>
<dbReference type="GO" id="GO:0005886">
    <property type="term" value="C:plasma membrane"/>
    <property type="evidence" value="ECO:0000318"/>
    <property type="project" value="GO_Central"/>
</dbReference>
<dbReference type="GO" id="GO:0004930">
    <property type="term" value="F:G protein-coupled receptor activity"/>
    <property type="evidence" value="ECO:0007669"/>
    <property type="project" value="UniProtKB-KW"/>
</dbReference>
<dbReference type="GO" id="GO:0004984">
    <property type="term" value="F:olfactory receptor activity"/>
    <property type="evidence" value="ECO:0000318"/>
    <property type="project" value="GO_Central"/>
</dbReference>
<dbReference type="GO" id="GO:0007165">
    <property type="term" value="P:signal transduction"/>
    <property type="evidence" value="ECO:0000318"/>
    <property type="project" value="GO_Central"/>
</dbReference>
<dbReference type="CDD" id="cd15918">
    <property type="entry name" value="7tmA_OR1_7-like"/>
    <property type="match status" value="1"/>
</dbReference>
<dbReference type="FunFam" id="1.10.1220.70:FF:000001">
    <property type="entry name" value="Olfactory receptor"/>
    <property type="match status" value="1"/>
</dbReference>
<dbReference type="FunFam" id="1.20.1070.10:FF:000082">
    <property type="entry name" value="Olfactory receptor 1A1"/>
    <property type="match status" value="1"/>
</dbReference>
<dbReference type="Gene3D" id="1.20.1070.10">
    <property type="entry name" value="Rhodopsin 7-helix transmembrane proteins"/>
    <property type="match status" value="1"/>
</dbReference>
<dbReference type="InterPro" id="IPR000276">
    <property type="entry name" value="GPCR_Rhodpsn"/>
</dbReference>
<dbReference type="InterPro" id="IPR017452">
    <property type="entry name" value="GPCR_Rhodpsn_7TM"/>
</dbReference>
<dbReference type="InterPro" id="IPR000725">
    <property type="entry name" value="Olfact_rcpt"/>
</dbReference>
<dbReference type="PANTHER" id="PTHR48001">
    <property type="entry name" value="OLFACTORY RECEPTOR"/>
    <property type="match status" value="1"/>
</dbReference>
<dbReference type="Pfam" id="PF13853">
    <property type="entry name" value="7tm_4"/>
    <property type="match status" value="1"/>
</dbReference>
<dbReference type="PRINTS" id="PR00237">
    <property type="entry name" value="GPCRRHODOPSN"/>
</dbReference>
<dbReference type="PRINTS" id="PR00245">
    <property type="entry name" value="OLFACTORYR"/>
</dbReference>
<dbReference type="SUPFAM" id="SSF81321">
    <property type="entry name" value="Family A G protein-coupled receptor-like"/>
    <property type="match status" value="1"/>
</dbReference>
<dbReference type="PROSITE" id="PS00237">
    <property type="entry name" value="G_PROTEIN_RECEP_F1_1"/>
    <property type="match status" value="1"/>
</dbReference>
<dbReference type="PROSITE" id="PS50262">
    <property type="entry name" value="G_PROTEIN_RECEP_F1_2"/>
    <property type="match status" value="1"/>
</dbReference>
<protein>
    <recommendedName>
        <fullName>Putative olfactory receptor 1F2</fullName>
    </recommendedName>
    <alternativeName>
        <fullName>OLFmf2</fullName>
    </alternativeName>
</protein>
<comment type="function">
    <text evidence="3">Odorant receptor.</text>
</comment>
<comment type="subcellular location">
    <subcellularLocation>
        <location>Cell membrane</location>
        <topology>Multi-pass membrane protein</topology>
    </subcellularLocation>
</comment>
<comment type="similarity">
    <text evidence="2">Belongs to the G-protein coupled receptor 1 family.</text>
</comment>
<comment type="caution">
    <text evidence="3">Could be the product of a pseudogene.</text>
</comment>
<comment type="sequence caution" evidence="3">
    <conflict type="frameshift">
        <sequence resource="EMBL" id="AJ003145"/>
    </conflict>
</comment>
<comment type="online information" name="Human Olfactory Receptor Data Exploratorium (HORDE)">
    <link uri="http://genome.weizmann.ac.il/horde/card/index/symbol:OR1F2"/>
</comment>
<gene>
    <name type="primary">OR1F2P</name>
    <name type="synonym">OR1F2</name>
</gene>
<name>OR1F2_HUMAN</name>
<evidence type="ECO:0000255" key="1"/>
<evidence type="ECO:0000255" key="2">
    <source>
        <dbReference type="PROSITE-ProRule" id="PRU00521"/>
    </source>
</evidence>
<evidence type="ECO:0000305" key="3"/>
<feature type="chain" id="PRO_0000150432" description="Putative olfactory receptor 1F2">
    <location>
        <begin position="1"/>
        <end position="312"/>
    </location>
</feature>
<feature type="topological domain" description="Extracellular" evidence="1">
    <location>
        <begin position="1"/>
        <end position="25"/>
    </location>
</feature>
<feature type="transmembrane region" description="Helical; Name=1" evidence="1">
    <location>
        <begin position="26"/>
        <end position="49"/>
    </location>
</feature>
<feature type="topological domain" description="Cytoplasmic" evidence="1">
    <location>
        <begin position="50"/>
        <end position="57"/>
    </location>
</feature>
<feature type="transmembrane region" description="Helical; Name=2" evidence="1">
    <location>
        <begin position="58"/>
        <end position="78"/>
    </location>
</feature>
<feature type="topological domain" description="Extracellular" evidence="1">
    <location>
        <begin position="79"/>
        <end position="99"/>
    </location>
</feature>
<feature type="transmembrane region" description="Helical; Name=3" evidence="1">
    <location>
        <begin position="100"/>
        <end position="119"/>
    </location>
</feature>
<feature type="topological domain" description="Cytoplasmic" evidence="1">
    <location>
        <begin position="120"/>
        <end position="138"/>
    </location>
</feature>
<feature type="transmembrane region" description="Helical; Name=4" evidence="1">
    <location>
        <begin position="139"/>
        <end position="157"/>
    </location>
</feature>
<feature type="topological domain" description="Extracellular" evidence="1">
    <location>
        <begin position="158"/>
        <end position="195"/>
    </location>
</feature>
<feature type="transmembrane region" description="Helical; Name=5" evidence="1">
    <location>
        <begin position="196"/>
        <end position="218"/>
    </location>
</feature>
<feature type="topological domain" description="Cytoplasmic" evidence="1">
    <location>
        <begin position="219"/>
        <end position="235"/>
    </location>
</feature>
<feature type="transmembrane region" description="Helical; Name=6" evidence="1">
    <location>
        <begin position="236"/>
        <end position="258"/>
    </location>
</feature>
<feature type="topological domain" description="Extracellular" evidence="1">
    <location>
        <begin position="259"/>
        <end position="271"/>
    </location>
</feature>
<feature type="transmembrane region" description="Helical; Name=7" evidence="1">
    <location>
        <begin position="272"/>
        <end position="291"/>
    </location>
</feature>
<feature type="topological domain" description="Cytoplasmic" evidence="1">
    <location>
        <begin position="292"/>
        <end position="312"/>
    </location>
</feature>
<feature type="disulfide bond" evidence="2">
    <location>
        <begin position="96"/>
        <end position="188"/>
    </location>
</feature>
<feature type="sequence conflict" description="In Ref. 2; AAK95043." evidence="3" ref="2">
    <original>I</original>
    <variation>T</variation>
    <location>
        <position position="136"/>
    </location>
</feature>
<sequence length="312" mass="34944">MERDKPVSVSEFLLLGLSRQPQQQHLLFVFFLSMYLATVLGNLLIILAISIDSRLHTPMYFFLSNMSFVDNCFSTTVPKMLANHILRTQTISFSGCLMQMYFISELADMDNFLLAVMAYDRFVAVCRPLHYTAKMIHQLCALLVTGSWVVANSNALLHTLLMARLSFCADNTIPHIFCDVTPLLKLSCSDTHLSEVMILTEAALVTITPFLCLLASYMHITCVVLRVPSTKGRWKAFSTCGSHLAVVLLFYGTIMSPYFRTSSSHSAQRDIAAAVRFTVVTPVMNPLIYSLRNKDIKGALVKVVAVKFFSVQ</sequence>
<accession>Q96R84</accession>
<keyword id="KW-1003">Cell membrane</keyword>
<keyword id="KW-1015">Disulfide bond</keyword>
<keyword id="KW-0297">G-protein coupled receptor</keyword>
<keyword id="KW-0472">Membrane</keyword>
<keyword id="KW-0552">Olfaction</keyword>
<keyword id="KW-0675">Receptor</keyword>
<keyword id="KW-1185">Reference proteome</keyword>
<keyword id="KW-0716">Sensory transduction</keyword>
<keyword id="KW-0807">Transducer</keyword>
<keyword id="KW-0812">Transmembrane</keyword>
<keyword id="KW-1133">Transmembrane helix</keyword>